<comment type="function">
    <text evidence="1">Fluoride-specific ion channel. Important for reducing fluoride concentration in the cell, thus reducing its toxicity.</text>
</comment>
<comment type="catalytic activity">
    <reaction evidence="1">
        <text>fluoride(in) = fluoride(out)</text>
        <dbReference type="Rhea" id="RHEA:76159"/>
        <dbReference type="ChEBI" id="CHEBI:17051"/>
    </reaction>
    <physiologicalReaction direction="left-to-right" evidence="1">
        <dbReference type="Rhea" id="RHEA:76160"/>
    </physiologicalReaction>
</comment>
<comment type="activity regulation">
    <text evidence="1">Na(+) is not transported, but it plays an essential structural role and its presence is essential for fluoride channel function.</text>
</comment>
<comment type="subcellular location">
    <subcellularLocation>
        <location evidence="1">Cell inner membrane</location>
        <topology evidence="1">Multi-pass membrane protein</topology>
    </subcellularLocation>
</comment>
<comment type="similarity">
    <text evidence="1">Belongs to the fluoride channel Fluc/FEX (TC 1.A.43) family.</text>
</comment>
<organism>
    <name type="scientific">Pseudomonas paraeruginosa (strain DSM 24068 / PA7)</name>
    <name type="common">Pseudomonas aeruginosa (strain PA7)</name>
    <dbReference type="NCBI Taxonomy" id="381754"/>
    <lineage>
        <taxon>Bacteria</taxon>
        <taxon>Pseudomonadati</taxon>
        <taxon>Pseudomonadota</taxon>
        <taxon>Gammaproteobacteria</taxon>
        <taxon>Pseudomonadales</taxon>
        <taxon>Pseudomonadaceae</taxon>
        <taxon>Pseudomonas</taxon>
        <taxon>Pseudomonas paraeruginosa</taxon>
    </lineage>
</organism>
<dbReference type="EMBL" id="CP000744">
    <property type="protein sequence ID" value="ABR82535.1"/>
    <property type="molecule type" value="Genomic_DNA"/>
</dbReference>
<dbReference type="RefSeq" id="WP_003156293.1">
    <property type="nucleotide sequence ID" value="NC_009656.1"/>
</dbReference>
<dbReference type="SMR" id="A6VB55"/>
<dbReference type="KEGG" id="pap:PSPA7_4954"/>
<dbReference type="HOGENOM" id="CLU_114342_3_3_6"/>
<dbReference type="Proteomes" id="UP000001582">
    <property type="component" value="Chromosome"/>
</dbReference>
<dbReference type="GO" id="GO:0005886">
    <property type="term" value="C:plasma membrane"/>
    <property type="evidence" value="ECO:0007669"/>
    <property type="project" value="UniProtKB-SubCell"/>
</dbReference>
<dbReference type="GO" id="GO:0062054">
    <property type="term" value="F:fluoride channel activity"/>
    <property type="evidence" value="ECO:0007669"/>
    <property type="project" value="UniProtKB-UniRule"/>
</dbReference>
<dbReference type="GO" id="GO:0046872">
    <property type="term" value="F:metal ion binding"/>
    <property type="evidence" value="ECO:0007669"/>
    <property type="project" value="UniProtKB-KW"/>
</dbReference>
<dbReference type="GO" id="GO:0140114">
    <property type="term" value="P:cellular detoxification of fluoride"/>
    <property type="evidence" value="ECO:0007669"/>
    <property type="project" value="UniProtKB-UniRule"/>
</dbReference>
<dbReference type="HAMAP" id="MF_00454">
    <property type="entry name" value="FluC"/>
    <property type="match status" value="1"/>
</dbReference>
<dbReference type="InterPro" id="IPR003691">
    <property type="entry name" value="FluC"/>
</dbReference>
<dbReference type="NCBIfam" id="TIGR00494">
    <property type="entry name" value="crcB"/>
    <property type="match status" value="1"/>
</dbReference>
<dbReference type="NCBIfam" id="NF010792">
    <property type="entry name" value="PRK14196.1"/>
    <property type="match status" value="1"/>
</dbReference>
<dbReference type="PANTHER" id="PTHR28259">
    <property type="entry name" value="FLUORIDE EXPORT PROTEIN 1-RELATED"/>
    <property type="match status" value="1"/>
</dbReference>
<dbReference type="PANTHER" id="PTHR28259:SF1">
    <property type="entry name" value="FLUORIDE EXPORT PROTEIN 1-RELATED"/>
    <property type="match status" value="1"/>
</dbReference>
<dbReference type="Pfam" id="PF02537">
    <property type="entry name" value="CRCB"/>
    <property type="match status" value="1"/>
</dbReference>
<evidence type="ECO:0000255" key="1">
    <source>
        <dbReference type="HAMAP-Rule" id="MF_00454"/>
    </source>
</evidence>
<keyword id="KW-0997">Cell inner membrane</keyword>
<keyword id="KW-1003">Cell membrane</keyword>
<keyword id="KW-0407">Ion channel</keyword>
<keyword id="KW-0406">Ion transport</keyword>
<keyword id="KW-0472">Membrane</keyword>
<keyword id="KW-0479">Metal-binding</keyword>
<keyword id="KW-0915">Sodium</keyword>
<keyword id="KW-0812">Transmembrane</keyword>
<keyword id="KW-1133">Transmembrane helix</keyword>
<keyword id="KW-0813">Transport</keyword>
<sequence>MWKSILAIALGAALGALLRWFLGLKLNSLLPSIPPGTLLANLVGGYAIGAAIAYFAQAPGIAPEWRLLIITGFCGGLTTFSTFSAEVVTLLQEGRLGWAAGAIATHVGGSLLMTLLGLFSMNWMLGR</sequence>
<proteinExistence type="inferred from homology"/>
<protein>
    <recommendedName>
        <fullName evidence="1">Fluoride-specific ion channel FluC</fullName>
    </recommendedName>
</protein>
<accession>A6VB55</accession>
<gene>
    <name evidence="1" type="primary">fluC</name>
    <name evidence="1" type="synonym">crcB</name>
    <name type="ordered locus">PSPA7_4954</name>
</gene>
<name>FLUC_PSEP7</name>
<feature type="chain" id="PRO_1000060315" description="Fluoride-specific ion channel FluC">
    <location>
        <begin position="1"/>
        <end position="127"/>
    </location>
</feature>
<feature type="transmembrane region" description="Helical" evidence="1">
    <location>
        <begin position="4"/>
        <end position="24"/>
    </location>
</feature>
<feature type="transmembrane region" description="Helical" evidence="1">
    <location>
        <begin position="36"/>
        <end position="56"/>
    </location>
</feature>
<feature type="transmembrane region" description="Helical" evidence="1">
    <location>
        <begin position="68"/>
        <end position="88"/>
    </location>
</feature>
<feature type="transmembrane region" description="Helical" evidence="1">
    <location>
        <begin position="99"/>
        <end position="119"/>
    </location>
</feature>
<feature type="binding site" evidence="1">
    <location>
        <position position="75"/>
    </location>
    <ligand>
        <name>Na(+)</name>
        <dbReference type="ChEBI" id="CHEBI:29101"/>
        <note>structural</note>
    </ligand>
</feature>
<feature type="binding site" evidence="1">
    <location>
        <position position="78"/>
    </location>
    <ligand>
        <name>Na(+)</name>
        <dbReference type="ChEBI" id="CHEBI:29101"/>
        <note>structural</note>
    </ligand>
</feature>
<reference key="1">
    <citation type="submission" date="2007-06" db="EMBL/GenBank/DDBJ databases">
        <authorList>
            <person name="Dodson R.J."/>
            <person name="Harkins D."/>
            <person name="Paulsen I.T."/>
        </authorList>
    </citation>
    <scope>NUCLEOTIDE SEQUENCE [LARGE SCALE GENOMIC DNA]</scope>
    <source>
        <strain>DSM 24068 / PA7</strain>
    </source>
</reference>